<comment type="catalytic activity">
    <reaction evidence="1">
        <text>tRNA(Phe) + L-phenylalanine + ATP = L-phenylalanyl-tRNA(Phe) + AMP + diphosphate + H(+)</text>
        <dbReference type="Rhea" id="RHEA:19413"/>
        <dbReference type="Rhea" id="RHEA-COMP:9668"/>
        <dbReference type="Rhea" id="RHEA-COMP:9699"/>
        <dbReference type="ChEBI" id="CHEBI:15378"/>
        <dbReference type="ChEBI" id="CHEBI:30616"/>
        <dbReference type="ChEBI" id="CHEBI:33019"/>
        <dbReference type="ChEBI" id="CHEBI:58095"/>
        <dbReference type="ChEBI" id="CHEBI:78442"/>
        <dbReference type="ChEBI" id="CHEBI:78531"/>
        <dbReference type="ChEBI" id="CHEBI:456215"/>
        <dbReference type="EC" id="6.1.1.20"/>
    </reaction>
</comment>
<comment type="cofactor">
    <cofactor evidence="1">
        <name>Mg(2+)</name>
        <dbReference type="ChEBI" id="CHEBI:18420"/>
    </cofactor>
    <text evidence="1">Binds 2 magnesium ions per tetramer.</text>
</comment>
<comment type="subunit">
    <text evidence="1">Tetramer of two alpha and two beta subunits.</text>
</comment>
<comment type="subcellular location">
    <subcellularLocation>
        <location evidence="1">Cytoplasm</location>
    </subcellularLocation>
</comment>
<comment type="similarity">
    <text evidence="1">Belongs to the class-II aminoacyl-tRNA synthetase family. Phe-tRNA synthetase alpha subunit type 1 subfamily.</text>
</comment>
<comment type="sequence caution" evidence="2">
    <conflict type="erroneous initiation">
        <sequence resource="EMBL-CDS" id="AAK33709"/>
    </conflict>
</comment>
<gene>
    <name evidence="1" type="primary">pheS</name>
    <name type="ordered locus">SPy_0768</name>
    <name type="ordered locus">M5005_Spy0587</name>
</gene>
<keyword id="KW-0030">Aminoacyl-tRNA synthetase</keyword>
<keyword id="KW-0067">ATP-binding</keyword>
<keyword id="KW-0963">Cytoplasm</keyword>
<keyword id="KW-0436">Ligase</keyword>
<keyword id="KW-0460">Magnesium</keyword>
<keyword id="KW-0479">Metal-binding</keyword>
<keyword id="KW-0547">Nucleotide-binding</keyword>
<keyword id="KW-0648">Protein biosynthesis</keyword>
<keyword id="KW-1185">Reference proteome</keyword>
<name>SYFA_STRP1</name>
<reference key="1">
    <citation type="journal article" date="2001" name="Proc. Natl. Acad. Sci. U.S.A.">
        <title>Complete genome sequence of an M1 strain of Streptococcus pyogenes.</title>
        <authorList>
            <person name="Ferretti J.J."/>
            <person name="McShan W.M."/>
            <person name="Ajdic D.J."/>
            <person name="Savic D.J."/>
            <person name="Savic G."/>
            <person name="Lyon K."/>
            <person name="Primeaux C."/>
            <person name="Sezate S."/>
            <person name="Suvorov A.N."/>
            <person name="Kenton S."/>
            <person name="Lai H.S."/>
            <person name="Lin S.P."/>
            <person name="Qian Y."/>
            <person name="Jia H.G."/>
            <person name="Najar F.Z."/>
            <person name="Ren Q."/>
            <person name="Zhu H."/>
            <person name="Song L."/>
            <person name="White J."/>
            <person name="Yuan X."/>
            <person name="Clifton S.W."/>
            <person name="Roe B.A."/>
            <person name="McLaughlin R.E."/>
        </authorList>
    </citation>
    <scope>NUCLEOTIDE SEQUENCE [LARGE SCALE GENOMIC DNA]</scope>
    <source>
        <strain>ATCC 700294 / SF370 / Serotype M1</strain>
    </source>
</reference>
<reference key="2">
    <citation type="journal article" date="2005" name="J. Infect. Dis.">
        <title>Evolutionary origin and emergence of a highly successful clone of serotype M1 group A Streptococcus involved multiple horizontal gene transfer events.</title>
        <authorList>
            <person name="Sumby P."/>
            <person name="Porcella S.F."/>
            <person name="Madrigal A.G."/>
            <person name="Barbian K.D."/>
            <person name="Virtaneva K."/>
            <person name="Ricklefs S.M."/>
            <person name="Sturdevant D.E."/>
            <person name="Graham M.R."/>
            <person name="Vuopio-Varkila J."/>
            <person name="Hoe N.P."/>
            <person name="Musser J.M."/>
        </authorList>
    </citation>
    <scope>NUCLEOTIDE SEQUENCE [LARGE SCALE GENOMIC DNA]</scope>
    <source>
        <strain>ATCC BAA-947 / MGAS5005 / Serotype M1</strain>
    </source>
</reference>
<sequence length="347" mass="39179">MDLQAQLEELKTKTLETLQSLTGNHTKELQDLRVAVLGKKGSLTELLKGLKDLSNDLRPVVGKQVNEVRDLLTKAFEEQAKIVEAAKIQAQLDAESIDVTLPGRQMTLGHRHVLTQTSEEIEDIFLGMGFQIVDGFEVEKDYYNFERMNLPKDHPARDMQDTFYITEEILLRTHTSPVQARTLDQHDFSKGPLKMVSPGRVFRRDTDDATHSHQFHQIEGLVVGKNISMGDLKGTLEMIIKKMFGDERSIRLRPSYFPFTEPSVEVDVSCFKCGGKGCNVCKKTGWIEILGAGMVHPSVLEMSGVDAKEYSGFAFGLGQERIAMLRYGINDIRGFYQGDQRFSEQFN</sequence>
<accession>Q9A0I1</accession>
<accession>Q48ZL3</accession>
<dbReference type="EC" id="6.1.1.20" evidence="1"/>
<dbReference type="EMBL" id="AE004092">
    <property type="protein sequence ID" value="AAK33709.1"/>
    <property type="status" value="ALT_INIT"/>
    <property type="molecule type" value="Genomic_DNA"/>
</dbReference>
<dbReference type="EMBL" id="CP000017">
    <property type="protein sequence ID" value="AAZ51205.1"/>
    <property type="molecule type" value="Genomic_DNA"/>
</dbReference>
<dbReference type="RefSeq" id="NP_268988.3">
    <property type="nucleotide sequence ID" value="NC_002737.2"/>
</dbReference>
<dbReference type="SMR" id="Q9A0I1"/>
<dbReference type="PaxDb" id="1314-HKU360_00598"/>
<dbReference type="KEGG" id="spy:SPy_0768"/>
<dbReference type="KEGG" id="spz:M5005_Spy0587"/>
<dbReference type="PATRIC" id="fig|160490.10.peg.655"/>
<dbReference type="HOGENOM" id="CLU_025086_0_1_9"/>
<dbReference type="OMA" id="EIMGCGM"/>
<dbReference type="Proteomes" id="UP000000750">
    <property type="component" value="Chromosome"/>
</dbReference>
<dbReference type="GO" id="GO:0005737">
    <property type="term" value="C:cytoplasm"/>
    <property type="evidence" value="ECO:0007669"/>
    <property type="project" value="UniProtKB-SubCell"/>
</dbReference>
<dbReference type="GO" id="GO:0005524">
    <property type="term" value="F:ATP binding"/>
    <property type="evidence" value="ECO:0007669"/>
    <property type="project" value="UniProtKB-UniRule"/>
</dbReference>
<dbReference type="GO" id="GO:0140096">
    <property type="term" value="F:catalytic activity, acting on a protein"/>
    <property type="evidence" value="ECO:0007669"/>
    <property type="project" value="UniProtKB-ARBA"/>
</dbReference>
<dbReference type="GO" id="GO:0000287">
    <property type="term" value="F:magnesium ion binding"/>
    <property type="evidence" value="ECO:0007669"/>
    <property type="project" value="UniProtKB-UniRule"/>
</dbReference>
<dbReference type="GO" id="GO:0004826">
    <property type="term" value="F:phenylalanine-tRNA ligase activity"/>
    <property type="evidence" value="ECO:0007669"/>
    <property type="project" value="UniProtKB-UniRule"/>
</dbReference>
<dbReference type="GO" id="GO:0016740">
    <property type="term" value="F:transferase activity"/>
    <property type="evidence" value="ECO:0007669"/>
    <property type="project" value="UniProtKB-ARBA"/>
</dbReference>
<dbReference type="GO" id="GO:0000049">
    <property type="term" value="F:tRNA binding"/>
    <property type="evidence" value="ECO:0007669"/>
    <property type="project" value="InterPro"/>
</dbReference>
<dbReference type="GO" id="GO:0006432">
    <property type="term" value="P:phenylalanyl-tRNA aminoacylation"/>
    <property type="evidence" value="ECO:0007669"/>
    <property type="project" value="UniProtKB-UniRule"/>
</dbReference>
<dbReference type="CDD" id="cd00496">
    <property type="entry name" value="PheRS_alpha_core"/>
    <property type="match status" value="1"/>
</dbReference>
<dbReference type="FunFam" id="3.30.930.10:FF:000003">
    <property type="entry name" value="Phenylalanine--tRNA ligase alpha subunit"/>
    <property type="match status" value="1"/>
</dbReference>
<dbReference type="Gene3D" id="3.30.930.10">
    <property type="entry name" value="Bira Bifunctional Protein, Domain 2"/>
    <property type="match status" value="1"/>
</dbReference>
<dbReference type="HAMAP" id="MF_00281">
    <property type="entry name" value="Phe_tRNA_synth_alpha1"/>
    <property type="match status" value="1"/>
</dbReference>
<dbReference type="InterPro" id="IPR006195">
    <property type="entry name" value="aa-tRNA-synth_II"/>
</dbReference>
<dbReference type="InterPro" id="IPR045864">
    <property type="entry name" value="aa-tRNA-synth_II/BPL/LPL"/>
</dbReference>
<dbReference type="InterPro" id="IPR004529">
    <property type="entry name" value="Phe-tRNA-synth_IIc_asu"/>
</dbReference>
<dbReference type="InterPro" id="IPR004188">
    <property type="entry name" value="Phe-tRNA_ligase_II_N"/>
</dbReference>
<dbReference type="InterPro" id="IPR022911">
    <property type="entry name" value="Phe_tRNA_ligase_alpha1_bac"/>
</dbReference>
<dbReference type="InterPro" id="IPR002319">
    <property type="entry name" value="Phenylalanyl-tRNA_Synthase"/>
</dbReference>
<dbReference type="InterPro" id="IPR010978">
    <property type="entry name" value="tRNA-bd_arm"/>
</dbReference>
<dbReference type="NCBIfam" id="TIGR00468">
    <property type="entry name" value="pheS"/>
    <property type="match status" value="1"/>
</dbReference>
<dbReference type="PANTHER" id="PTHR11538:SF41">
    <property type="entry name" value="PHENYLALANINE--TRNA LIGASE, MITOCHONDRIAL"/>
    <property type="match status" value="1"/>
</dbReference>
<dbReference type="PANTHER" id="PTHR11538">
    <property type="entry name" value="PHENYLALANYL-TRNA SYNTHETASE"/>
    <property type="match status" value="1"/>
</dbReference>
<dbReference type="Pfam" id="PF02912">
    <property type="entry name" value="Phe_tRNA-synt_N"/>
    <property type="match status" value="1"/>
</dbReference>
<dbReference type="Pfam" id="PF01409">
    <property type="entry name" value="tRNA-synt_2d"/>
    <property type="match status" value="1"/>
</dbReference>
<dbReference type="SUPFAM" id="SSF55681">
    <property type="entry name" value="Class II aaRS and biotin synthetases"/>
    <property type="match status" value="1"/>
</dbReference>
<dbReference type="SUPFAM" id="SSF46589">
    <property type="entry name" value="tRNA-binding arm"/>
    <property type="match status" value="1"/>
</dbReference>
<dbReference type="PROSITE" id="PS50862">
    <property type="entry name" value="AA_TRNA_LIGASE_II"/>
    <property type="match status" value="1"/>
</dbReference>
<protein>
    <recommendedName>
        <fullName evidence="1">Phenylalanine--tRNA ligase alpha subunit</fullName>
        <ecNumber evidence="1">6.1.1.20</ecNumber>
    </recommendedName>
    <alternativeName>
        <fullName evidence="1">Phenylalanyl-tRNA synthetase alpha subunit</fullName>
        <shortName evidence="1">PheRS</shortName>
    </alternativeName>
</protein>
<evidence type="ECO:0000255" key="1">
    <source>
        <dbReference type="HAMAP-Rule" id="MF_00281"/>
    </source>
</evidence>
<evidence type="ECO:0000305" key="2"/>
<proteinExistence type="inferred from homology"/>
<feature type="chain" id="PRO_0000126775" description="Phenylalanine--tRNA ligase alpha subunit">
    <location>
        <begin position="1"/>
        <end position="347"/>
    </location>
</feature>
<feature type="binding site" evidence="1">
    <location>
        <position position="261"/>
    </location>
    <ligand>
        <name>Mg(2+)</name>
        <dbReference type="ChEBI" id="CHEBI:18420"/>
        <note>shared with beta subunit</note>
    </ligand>
</feature>
<organism>
    <name type="scientific">Streptococcus pyogenes serotype M1</name>
    <dbReference type="NCBI Taxonomy" id="301447"/>
    <lineage>
        <taxon>Bacteria</taxon>
        <taxon>Bacillati</taxon>
        <taxon>Bacillota</taxon>
        <taxon>Bacilli</taxon>
        <taxon>Lactobacillales</taxon>
        <taxon>Streptococcaceae</taxon>
        <taxon>Streptococcus</taxon>
    </lineage>
</organism>